<dbReference type="EC" id="6.3.2.8" evidence="1"/>
<dbReference type="EMBL" id="AB052554">
    <property type="protein sequence ID" value="BAB19203.1"/>
    <property type="status" value="ALT_INIT"/>
    <property type="molecule type" value="Genomic_DNA"/>
</dbReference>
<dbReference type="EMBL" id="AP011177">
    <property type="protein sequence ID" value="BAJ04003.1"/>
    <property type="status" value="ALT_INIT"/>
    <property type="molecule type" value="Genomic_DNA"/>
</dbReference>
<dbReference type="RefSeq" id="WP_041420108.1">
    <property type="nucleotide sequence ID" value="NC_014012.1"/>
</dbReference>
<dbReference type="SMR" id="Q9F1M9"/>
<dbReference type="STRING" id="637905.SVI_4032"/>
<dbReference type="KEGG" id="svo:SVI_4032"/>
<dbReference type="eggNOG" id="COG0773">
    <property type="taxonomic scope" value="Bacteria"/>
</dbReference>
<dbReference type="HOGENOM" id="CLU_028104_2_2_6"/>
<dbReference type="OrthoDB" id="9804126at2"/>
<dbReference type="UniPathway" id="UPA00219"/>
<dbReference type="Proteomes" id="UP000002350">
    <property type="component" value="Chromosome"/>
</dbReference>
<dbReference type="GO" id="GO:0005737">
    <property type="term" value="C:cytoplasm"/>
    <property type="evidence" value="ECO:0007669"/>
    <property type="project" value="UniProtKB-SubCell"/>
</dbReference>
<dbReference type="GO" id="GO:0005524">
    <property type="term" value="F:ATP binding"/>
    <property type="evidence" value="ECO:0007669"/>
    <property type="project" value="UniProtKB-UniRule"/>
</dbReference>
<dbReference type="GO" id="GO:0008763">
    <property type="term" value="F:UDP-N-acetylmuramate-L-alanine ligase activity"/>
    <property type="evidence" value="ECO:0007669"/>
    <property type="project" value="UniProtKB-UniRule"/>
</dbReference>
<dbReference type="GO" id="GO:0051301">
    <property type="term" value="P:cell division"/>
    <property type="evidence" value="ECO:0007669"/>
    <property type="project" value="UniProtKB-KW"/>
</dbReference>
<dbReference type="GO" id="GO:0071555">
    <property type="term" value="P:cell wall organization"/>
    <property type="evidence" value="ECO:0007669"/>
    <property type="project" value="UniProtKB-KW"/>
</dbReference>
<dbReference type="GO" id="GO:0009252">
    <property type="term" value="P:peptidoglycan biosynthetic process"/>
    <property type="evidence" value="ECO:0007669"/>
    <property type="project" value="UniProtKB-UniRule"/>
</dbReference>
<dbReference type="GO" id="GO:0008360">
    <property type="term" value="P:regulation of cell shape"/>
    <property type="evidence" value="ECO:0007669"/>
    <property type="project" value="UniProtKB-KW"/>
</dbReference>
<dbReference type="FunFam" id="3.40.1190.10:FF:000001">
    <property type="entry name" value="UDP-N-acetylmuramate--L-alanine ligase"/>
    <property type="match status" value="1"/>
</dbReference>
<dbReference type="FunFam" id="3.40.50.720:FF:000046">
    <property type="entry name" value="UDP-N-acetylmuramate--L-alanine ligase"/>
    <property type="match status" value="1"/>
</dbReference>
<dbReference type="Gene3D" id="3.90.190.20">
    <property type="entry name" value="Mur ligase, C-terminal domain"/>
    <property type="match status" value="1"/>
</dbReference>
<dbReference type="Gene3D" id="3.40.1190.10">
    <property type="entry name" value="Mur-like, catalytic domain"/>
    <property type="match status" value="1"/>
</dbReference>
<dbReference type="Gene3D" id="3.40.50.720">
    <property type="entry name" value="NAD(P)-binding Rossmann-like Domain"/>
    <property type="match status" value="1"/>
</dbReference>
<dbReference type="HAMAP" id="MF_00046">
    <property type="entry name" value="MurC"/>
    <property type="match status" value="1"/>
</dbReference>
<dbReference type="InterPro" id="IPR036565">
    <property type="entry name" value="Mur-like_cat_sf"/>
</dbReference>
<dbReference type="InterPro" id="IPR004101">
    <property type="entry name" value="Mur_ligase_C"/>
</dbReference>
<dbReference type="InterPro" id="IPR036615">
    <property type="entry name" value="Mur_ligase_C_dom_sf"/>
</dbReference>
<dbReference type="InterPro" id="IPR013221">
    <property type="entry name" value="Mur_ligase_cen"/>
</dbReference>
<dbReference type="InterPro" id="IPR000713">
    <property type="entry name" value="Mur_ligase_N"/>
</dbReference>
<dbReference type="InterPro" id="IPR050061">
    <property type="entry name" value="MurCDEF_pg_biosynth"/>
</dbReference>
<dbReference type="InterPro" id="IPR005758">
    <property type="entry name" value="UDP-N-AcMur_Ala_ligase_MurC"/>
</dbReference>
<dbReference type="NCBIfam" id="TIGR01082">
    <property type="entry name" value="murC"/>
    <property type="match status" value="1"/>
</dbReference>
<dbReference type="PANTHER" id="PTHR43445:SF3">
    <property type="entry name" value="UDP-N-ACETYLMURAMATE--L-ALANINE LIGASE"/>
    <property type="match status" value="1"/>
</dbReference>
<dbReference type="PANTHER" id="PTHR43445">
    <property type="entry name" value="UDP-N-ACETYLMURAMATE--L-ALANINE LIGASE-RELATED"/>
    <property type="match status" value="1"/>
</dbReference>
<dbReference type="Pfam" id="PF01225">
    <property type="entry name" value="Mur_ligase"/>
    <property type="match status" value="1"/>
</dbReference>
<dbReference type="Pfam" id="PF02875">
    <property type="entry name" value="Mur_ligase_C"/>
    <property type="match status" value="1"/>
</dbReference>
<dbReference type="Pfam" id="PF08245">
    <property type="entry name" value="Mur_ligase_M"/>
    <property type="match status" value="1"/>
</dbReference>
<dbReference type="SUPFAM" id="SSF51984">
    <property type="entry name" value="MurCD N-terminal domain"/>
    <property type="match status" value="1"/>
</dbReference>
<dbReference type="SUPFAM" id="SSF53623">
    <property type="entry name" value="MurD-like peptide ligases, catalytic domain"/>
    <property type="match status" value="1"/>
</dbReference>
<dbReference type="SUPFAM" id="SSF53244">
    <property type="entry name" value="MurD-like peptide ligases, peptide-binding domain"/>
    <property type="match status" value="1"/>
</dbReference>
<evidence type="ECO:0000255" key="1">
    <source>
        <dbReference type="HAMAP-Rule" id="MF_00046"/>
    </source>
</evidence>
<evidence type="ECO:0000305" key="2"/>
<feature type="chain" id="PRO_0000182150" description="UDP-N-acetylmuramate--L-alanine ligase">
    <location>
        <begin position="1"/>
        <end position="483"/>
    </location>
</feature>
<feature type="binding site" evidence="1">
    <location>
        <begin position="128"/>
        <end position="134"/>
    </location>
    <ligand>
        <name>ATP</name>
        <dbReference type="ChEBI" id="CHEBI:30616"/>
    </ligand>
</feature>
<protein>
    <recommendedName>
        <fullName evidence="1">UDP-N-acetylmuramate--L-alanine ligase</fullName>
        <ecNumber evidence="1">6.3.2.8</ecNumber>
    </recommendedName>
    <alternativeName>
        <fullName evidence="1">UDP-N-acetylmuramoyl-L-alanine synthetase</fullName>
    </alternativeName>
</protein>
<proteinExistence type="inferred from homology"/>
<sequence>MSKSKEKYSQLRSFIPEMRRVKHIYFVGIGGAGMGGIAEVLVNEGYRLSGSDIAENAVTERLKSLGVQIHIGHHADQVHGTDVVVVSTAIDAENPELVAAKELRIPVVQRAEMLAELMRYRHGVAVAGTHGKTTTTSLIASIYAQADRDPTFVIGGLLNSAGTNARLGNSRYLIAEADESDASFLHLQPMVSVVTNIEADHMDTYGGDFEKLKSTFIDFLHNLPFYGVAVMCIDDPVVRELLPKVGRKIVTYGFSEDADIQALNFVQQGYSSHFTLRRDGVEDIAVMVNLPGEHNVLNALASIAVATEDEIEDEAIVLALAQFEGIGRRFQQLGTFATSKGEVMLVDDYGHHPSEVAATIKAARLGWPDKRLVMIYQPHRYSRTRDLYDDFVEVLSQVDCLILLDVYSAGEAPVPGADSRALCRSIRQRGQLDPIFVAGTEQLLSLLPDVLQDGDLLLTQGAGNIGTLSKLIAQTNLGFEVVS</sequence>
<gene>
    <name evidence="1" type="primary">murC</name>
    <name type="ordered locus">SVI_4032</name>
</gene>
<comment type="function">
    <text evidence="1">Cell wall formation.</text>
</comment>
<comment type="catalytic activity">
    <reaction evidence="1">
        <text>UDP-N-acetyl-alpha-D-muramate + L-alanine + ATP = UDP-N-acetyl-alpha-D-muramoyl-L-alanine + ADP + phosphate + H(+)</text>
        <dbReference type="Rhea" id="RHEA:23372"/>
        <dbReference type="ChEBI" id="CHEBI:15378"/>
        <dbReference type="ChEBI" id="CHEBI:30616"/>
        <dbReference type="ChEBI" id="CHEBI:43474"/>
        <dbReference type="ChEBI" id="CHEBI:57972"/>
        <dbReference type="ChEBI" id="CHEBI:70757"/>
        <dbReference type="ChEBI" id="CHEBI:83898"/>
        <dbReference type="ChEBI" id="CHEBI:456216"/>
        <dbReference type="EC" id="6.3.2.8"/>
    </reaction>
</comment>
<comment type="pathway">
    <text evidence="1">Cell wall biogenesis; peptidoglycan biosynthesis.</text>
</comment>
<comment type="subcellular location">
    <subcellularLocation>
        <location evidence="1">Cytoplasm</location>
    </subcellularLocation>
</comment>
<comment type="similarity">
    <text evidence="1">Belongs to the MurCDEF family.</text>
</comment>
<comment type="sequence caution" evidence="2">
    <conflict type="erroneous initiation">
        <sequence resource="EMBL-CDS" id="BAB19203"/>
    </conflict>
    <text>Extended N-terminus.</text>
</comment>
<comment type="sequence caution" evidence="2">
    <conflict type="erroneous initiation">
        <sequence resource="EMBL-CDS" id="BAJ04003"/>
    </conflict>
    <text>Extended N-terminus.</text>
</comment>
<keyword id="KW-0067">ATP-binding</keyword>
<keyword id="KW-0131">Cell cycle</keyword>
<keyword id="KW-0132">Cell division</keyword>
<keyword id="KW-0133">Cell shape</keyword>
<keyword id="KW-0961">Cell wall biogenesis/degradation</keyword>
<keyword id="KW-0963">Cytoplasm</keyword>
<keyword id="KW-0436">Ligase</keyword>
<keyword id="KW-0547">Nucleotide-binding</keyword>
<keyword id="KW-0573">Peptidoglycan synthesis</keyword>
<keyword id="KW-1185">Reference proteome</keyword>
<accession>Q9F1M9</accession>
<accession>D4ZDU2</accession>
<reference key="1">
    <citation type="journal article" date="2002" name="J. Biochem.">
        <title>Isolation and characterization of the dcw cluster from the piezophilic deep-sea bacterium Shewanella violacea.</title>
        <authorList>
            <person name="Ishii A."/>
            <person name="Nakasone K."/>
            <person name="Sato T."/>
            <person name="Wachi M."/>
            <person name="Sugai M."/>
            <person name="Nagai K."/>
            <person name="Kato C."/>
        </authorList>
    </citation>
    <scope>NUCLEOTIDE SEQUENCE [GENOMIC DNA]</scope>
</reference>
<reference key="2">
    <citation type="journal article" date="2010" name="Mol. Biosyst.">
        <title>Complete genome sequence and comparative analysis of Shewanella violacea, a psychrophilic and piezophilic bacterium from deep sea floor sediments.</title>
        <authorList>
            <person name="Aono E."/>
            <person name="Baba T."/>
            <person name="Ara T."/>
            <person name="Nishi T."/>
            <person name="Nakamichi T."/>
            <person name="Inamoto E."/>
            <person name="Toyonaga H."/>
            <person name="Hasegawa M."/>
            <person name="Takai Y."/>
            <person name="Okumura Y."/>
            <person name="Baba M."/>
            <person name="Tomita M."/>
            <person name="Kato C."/>
            <person name="Oshima T."/>
            <person name="Nakasone K."/>
            <person name="Mori H."/>
        </authorList>
    </citation>
    <scope>NUCLEOTIDE SEQUENCE [LARGE SCALE GENOMIC DNA]</scope>
    <source>
        <strain>JCM 10179 / CIP 106290 / LMG 19151 / DSS12</strain>
    </source>
</reference>
<organism>
    <name type="scientific">Shewanella violacea (strain JCM 10179 / CIP 106290 / LMG 19151 / DSS12)</name>
    <dbReference type="NCBI Taxonomy" id="637905"/>
    <lineage>
        <taxon>Bacteria</taxon>
        <taxon>Pseudomonadati</taxon>
        <taxon>Pseudomonadota</taxon>
        <taxon>Gammaproteobacteria</taxon>
        <taxon>Alteromonadales</taxon>
        <taxon>Shewanellaceae</taxon>
        <taxon>Shewanella</taxon>
    </lineage>
</organism>
<name>MURC_SHEVD</name>